<proteinExistence type="evidence at protein level"/>
<evidence type="ECO:0000250" key="1"/>
<evidence type="ECO:0000250" key="2">
    <source>
        <dbReference type="UniProtKB" id="P35248"/>
    </source>
</evidence>
<evidence type="ECO:0000255" key="3"/>
<evidence type="ECO:0000255" key="4">
    <source>
        <dbReference type="PROSITE-ProRule" id="PRU00040"/>
    </source>
</evidence>
<evidence type="ECO:0000256" key="5">
    <source>
        <dbReference type="SAM" id="MobiDB-lite"/>
    </source>
</evidence>
<evidence type="ECO:0000305" key="6"/>
<name>SFTPD_MOUSE</name>
<organism>
    <name type="scientific">Mus musculus</name>
    <name type="common">Mouse</name>
    <dbReference type="NCBI Taxonomy" id="10090"/>
    <lineage>
        <taxon>Eukaryota</taxon>
        <taxon>Metazoa</taxon>
        <taxon>Chordata</taxon>
        <taxon>Craniata</taxon>
        <taxon>Vertebrata</taxon>
        <taxon>Euteleostomi</taxon>
        <taxon>Mammalia</taxon>
        <taxon>Eutheria</taxon>
        <taxon>Euarchontoglires</taxon>
        <taxon>Glires</taxon>
        <taxon>Rodentia</taxon>
        <taxon>Myomorpha</taxon>
        <taxon>Muroidea</taxon>
        <taxon>Muridae</taxon>
        <taxon>Murinae</taxon>
        <taxon>Mus</taxon>
        <taxon>Mus</taxon>
    </lineage>
</organism>
<dbReference type="EMBL" id="L40156">
    <property type="protein sequence ID" value="AAA92021.1"/>
    <property type="molecule type" value="mRNA"/>
</dbReference>
<dbReference type="EMBL" id="AF047742">
    <property type="protein sequence ID" value="AAD31380.1"/>
    <property type="molecule type" value="Genomic_DNA"/>
</dbReference>
<dbReference type="EMBL" id="AF047741">
    <property type="protein sequence ID" value="AAD31380.1"/>
    <property type="status" value="JOINED"/>
    <property type="molecule type" value="Genomic_DNA"/>
</dbReference>
<dbReference type="EMBL" id="AF192134">
    <property type="protein sequence ID" value="AAF15277.1"/>
    <property type="molecule type" value="Genomic_DNA"/>
</dbReference>
<dbReference type="EMBL" id="BC003705">
    <property type="protein sequence ID" value="AAH03705.1"/>
    <property type="molecule type" value="mRNA"/>
</dbReference>
<dbReference type="CCDS" id="CCDS26962.1"/>
<dbReference type="RefSeq" id="NP_033186.1">
    <property type="nucleotide sequence ID" value="NM_009160.2"/>
</dbReference>
<dbReference type="SMR" id="P50404"/>
<dbReference type="BioGRID" id="203194">
    <property type="interactions" value="2"/>
</dbReference>
<dbReference type="DIP" id="DIP-46338N"/>
<dbReference type="FunCoup" id="P50404">
    <property type="interactions" value="280"/>
</dbReference>
<dbReference type="IntAct" id="P50404">
    <property type="interactions" value="1"/>
</dbReference>
<dbReference type="STRING" id="10090.ENSMUSP00000076383"/>
<dbReference type="GlyCosmos" id="P50404">
    <property type="glycosylation" value="1 site, No reported glycans"/>
</dbReference>
<dbReference type="GlyGen" id="P50404">
    <property type="glycosylation" value="1 site, 1 N-linked glycan (1 site)"/>
</dbReference>
<dbReference type="PhosphoSitePlus" id="P50404"/>
<dbReference type="CPTAC" id="non-CPTAC-4006"/>
<dbReference type="PaxDb" id="10090-ENSMUSP00000076383"/>
<dbReference type="PeptideAtlas" id="P50404"/>
<dbReference type="ProteomicsDB" id="261200"/>
<dbReference type="Antibodypedia" id="3886">
    <property type="antibodies" value="583 antibodies from 38 providers"/>
</dbReference>
<dbReference type="DNASU" id="20390"/>
<dbReference type="Ensembl" id="ENSMUST00000077136.5">
    <property type="protein sequence ID" value="ENSMUSP00000076383.4"/>
    <property type="gene ID" value="ENSMUSG00000021795.11"/>
</dbReference>
<dbReference type="GeneID" id="20390"/>
<dbReference type="KEGG" id="mmu:20390"/>
<dbReference type="UCSC" id="uc007tcr.2">
    <property type="organism name" value="mouse"/>
</dbReference>
<dbReference type="AGR" id="MGI:109515"/>
<dbReference type="CTD" id="6441"/>
<dbReference type="MGI" id="MGI:109515">
    <property type="gene designation" value="Sftpd"/>
</dbReference>
<dbReference type="VEuPathDB" id="HostDB:ENSMUSG00000021795"/>
<dbReference type="eggNOG" id="KOG4297">
    <property type="taxonomic scope" value="Eukaryota"/>
</dbReference>
<dbReference type="GeneTree" id="ENSGT00940000155748"/>
<dbReference type="HOGENOM" id="CLU_049894_3_0_1"/>
<dbReference type="InParanoid" id="P50404"/>
<dbReference type="OMA" id="YQKVATF"/>
<dbReference type="OrthoDB" id="10255512at2759"/>
<dbReference type="PhylomeDB" id="P50404"/>
<dbReference type="TreeFam" id="TF330481"/>
<dbReference type="Reactome" id="R-MMU-166016">
    <property type="pathway name" value="Toll Like Receptor 4 (TLR4) Cascade"/>
</dbReference>
<dbReference type="Reactome" id="R-MMU-198933">
    <property type="pathway name" value="Immunoregulatory interactions between a Lymphoid and a non-Lymphoid cell"/>
</dbReference>
<dbReference type="Reactome" id="R-MMU-391160">
    <property type="pathway name" value="Signal regulatory protein family interactions"/>
</dbReference>
<dbReference type="Reactome" id="R-MMU-5683826">
    <property type="pathway name" value="Surfactant metabolism"/>
</dbReference>
<dbReference type="Reactome" id="R-MMU-5686938">
    <property type="pathway name" value="Regulation of TLR by endogenous ligand"/>
</dbReference>
<dbReference type="BioGRID-ORCS" id="20390">
    <property type="hits" value="3 hits in 77 CRISPR screens"/>
</dbReference>
<dbReference type="ChiTaRS" id="Sftpd">
    <property type="organism name" value="mouse"/>
</dbReference>
<dbReference type="PRO" id="PR:P50404"/>
<dbReference type="Proteomes" id="UP000000589">
    <property type="component" value="Chromosome 14"/>
</dbReference>
<dbReference type="RNAct" id="P50404">
    <property type="molecule type" value="protein"/>
</dbReference>
<dbReference type="Bgee" id="ENSMUSG00000021795">
    <property type="expression patterns" value="Expressed in right lung and 44 other cell types or tissues"/>
</dbReference>
<dbReference type="GO" id="GO:0005581">
    <property type="term" value="C:collagen trimer"/>
    <property type="evidence" value="ECO:0007669"/>
    <property type="project" value="UniProtKB-KW"/>
</dbReference>
<dbReference type="GO" id="GO:0062023">
    <property type="term" value="C:collagen-containing extracellular matrix"/>
    <property type="evidence" value="ECO:0007005"/>
    <property type="project" value="BHF-UCL"/>
</dbReference>
<dbReference type="GO" id="GO:0005737">
    <property type="term" value="C:cytoplasm"/>
    <property type="evidence" value="ECO:0000314"/>
    <property type="project" value="MGI"/>
</dbReference>
<dbReference type="GO" id="GO:0005576">
    <property type="term" value="C:extracellular region"/>
    <property type="evidence" value="ECO:0007669"/>
    <property type="project" value="UniProtKB-SubCell"/>
</dbReference>
<dbReference type="GO" id="GO:0030246">
    <property type="term" value="F:carbohydrate binding"/>
    <property type="evidence" value="ECO:0007669"/>
    <property type="project" value="UniProtKB-KW"/>
</dbReference>
<dbReference type="GO" id="GO:0042802">
    <property type="term" value="F:identical protein binding"/>
    <property type="evidence" value="ECO:0000353"/>
    <property type="project" value="IntAct"/>
</dbReference>
<dbReference type="GO" id="GO:0045087">
    <property type="term" value="P:innate immune response"/>
    <property type="evidence" value="ECO:0007669"/>
    <property type="project" value="UniProtKB-KW"/>
</dbReference>
<dbReference type="GO" id="GO:0048286">
    <property type="term" value="P:lung alveolus development"/>
    <property type="evidence" value="ECO:0000250"/>
    <property type="project" value="UniProtKB"/>
</dbReference>
<dbReference type="GO" id="GO:0007585">
    <property type="term" value="P:respiratory gaseous exchange by respiratory system"/>
    <property type="evidence" value="ECO:0007669"/>
    <property type="project" value="UniProtKB-KW"/>
</dbReference>
<dbReference type="GO" id="GO:0043129">
    <property type="term" value="P:surfactant homeostasis"/>
    <property type="evidence" value="ECO:0000250"/>
    <property type="project" value="UniProtKB"/>
</dbReference>
<dbReference type="CDD" id="cd03591">
    <property type="entry name" value="CLECT_collectin_like"/>
    <property type="match status" value="1"/>
</dbReference>
<dbReference type="FunFam" id="1.20.5.360:FF:000001">
    <property type="entry name" value="Pulmonary surfactant-associated protein D"/>
    <property type="match status" value="1"/>
</dbReference>
<dbReference type="FunFam" id="3.10.100.10:FF:000045">
    <property type="entry name" value="Pulmonary surfactant-associated protein D"/>
    <property type="match status" value="1"/>
</dbReference>
<dbReference type="Gene3D" id="3.10.100.10">
    <property type="entry name" value="Mannose-Binding Protein A, subunit A"/>
    <property type="match status" value="1"/>
</dbReference>
<dbReference type="Gene3D" id="1.20.5.360">
    <property type="entry name" value="SFTPD helical domain"/>
    <property type="match status" value="1"/>
</dbReference>
<dbReference type="InterPro" id="IPR001304">
    <property type="entry name" value="C-type_lectin-like"/>
</dbReference>
<dbReference type="InterPro" id="IPR016186">
    <property type="entry name" value="C-type_lectin-like/link_sf"/>
</dbReference>
<dbReference type="InterPro" id="IPR018378">
    <property type="entry name" value="C-type_lectin_CS"/>
</dbReference>
<dbReference type="InterPro" id="IPR051077">
    <property type="entry name" value="Ca-dependent_lectin"/>
</dbReference>
<dbReference type="InterPro" id="IPR008160">
    <property type="entry name" value="Collagen"/>
</dbReference>
<dbReference type="InterPro" id="IPR033990">
    <property type="entry name" value="Collectin_CTLD"/>
</dbReference>
<dbReference type="InterPro" id="IPR016187">
    <property type="entry name" value="CTDL_fold"/>
</dbReference>
<dbReference type="InterPro" id="IPR015097">
    <property type="entry name" value="Surfac_D-trimer"/>
</dbReference>
<dbReference type="PANTHER" id="PTHR24024">
    <property type="entry name" value="PULMONARY SURFACTANT-ASSOCIATED PROTEIN A"/>
    <property type="match status" value="1"/>
</dbReference>
<dbReference type="PANTHER" id="PTHR24024:SF15">
    <property type="entry name" value="PULMONARY SURFACTANT-ASSOCIATED PROTEIN D"/>
    <property type="match status" value="1"/>
</dbReference>
<dbReference type="Pfam" id="PF01391">
    <property type="entry name" value="Collagen"/>
    <property type="match status" value="3"/>
</dbReference>
<dbReference type="Pfam" id="PF00059">
    <property type="entry name" value="Lectin_C"/>
    <property type="match status" value="1"/>
</dbReference>
<dbReference type="Pfam" id="PF09006">
    <property type="entry name" value="Surfac_D-trimer"/>
    <property type="match status" value="1"/>
</dbReference>
<dbReference type="SMART" id="SM00034">
    <property type="entry name" value="CLECT"/>
    <property type="match status" value="1"/>
</dbReference>
<dbReference type="SUPFAM" id="SSF56436">
    <property type="entry name" value="C-type lectin-like"/>
    <property type="match status" value="1"/>
</dbReference>
<dbReference type="SUPFAM" id="SSF57944">
    <property type="entry name" value="Triple coiled coil domain of C-type lectins"/>
    <property type="match status" value="1"/>
</dbReference>
<dbReference type="PROSITE" id="PS00615">
    <property type="entry name" value="C_TYPE_LECTIN_1"/>
    <property type="match status" value="1"/>
</dbReference>
<dbReference type="PROSITE" id="PS50041">
    <property type="entry name" value="C_TYPE_LECTIN_2"/>
    <property type="match status" value="1"/>
</dbReference>
<reference key="1">
    <citation type="journal article" date="1995" name="J. Immunol.">
        <title>Mouse surfactant protein-D. cDNA cloning, characterization, and gene localization to chromosome 14.</title>
        <authorList>
            <person name="Motwani M."/>
            <person name="White R.A."/>
            <person name="Guo N."/>
            <person name="Dowler L.L."/>
            <person name="Tauber A.I."/>
            <person name="Sastry K.N."/>
        </authorList>
    </citation>
    <scope>NUCLEOTIDE SEQUENCE [MRNA]</scope>
    <source>
        <strain>C57BL/6 X CBA</strain>
        <tissue>Lung</tissue>
    </source>
</reference>
<reference key="2">
    <citation type="journal article" date="1999" name="Am. J. Respir. Cell Mol. Biol.">
        <title>Genomic organization of the mouse gene for lung surfactant protein D.</title>
        <authorList>
            <person name="Lawson P.R."/>
            <person name="Perkins V.C."/>
            <person name="Holmskov U."/>
            <person name="Reid K.B."/>
        </authorList>
    </citation>
    <scope>NUCLEOTIDE SEQUENCE [GENOMIC DNA]</scope>
    <source>
        <strain>129/Sv</strain>
    </source>
</reference>
<reference key="3">
    <citation type="submission" date="1999-10" db="EMBL/GenBank/DDBJ databases">
        <title>Surfactant protein-D regulates surfactant phospholipid homeostasis in vivo.</title>
        <authorList>
            <person name="Fisher J.H."/>
            <person name="Sheftelyevich V.V."/>
        </authorList>
    </citation>
    <scope>NUCLEOTIDE SEQUENCE</scope>
</reference>
<reference key="4">
    <citation type="journal article" date="2004" name="Genome Res.">
        <title>The status, quality, and expansion of the NIH full-length cDNA project: the Mammalian Gene Collection (MGC).</title>
        <authorList>
            <consortium name="The MGC Project Team"/>
        </authorList>
    </citation>
    <scope>NUCLEOTIDE SEQUENCE [LARGE SCALE MRNA]</scope>
</reference>
<reference key="5">
    <citation type="journal article" date="2010" name="Cell">
        <title>A tissue-specific atlas of mouse protein phosphorylation and expression.</title>
        <authorList>
            <person name="Huttlin E.L."/>
            <person name="Jedrychowski M.P."/>
            <person name="Elias J.E."/>
            <person name="Goswami T."/>
            <person name="Rad R."/>
            <person name="Beausoleil S.A."/>
            <person name="Villen J."/>
            <person name="Haas W."/>
            <person name="Sowa M.E."/>
            <person name="Gygi S.P."/>
        </authorList>
    </citation>
    <scope>IDENTIFICATION BY MASS SPECTROMETRY [LARGE SCALE ANALYSIS]</scope>
    <source>
        <tissue>Lung</tissue>
    </source>
</reference>
<keyword id="KW-0106">Calcium</keyword>
<keyword id="KW-0175">Coiled coil</keyword>
<keyword id="KW-0176">Collagen</keyword>
<keyword id="KW-1015">Disulfide bond</keyword>
<keyword id="KW-0272">Extracellular matrix</keyword>
<keyword id="KW-0305">Gaseous exchange</keyword>
<keyword id="KW-0325">Glycoprotein</keyword>
<keyword id="KW-0379">Hydroxylation</keyword>
<keyword id="KW-0391">Immunity</keyword>
<keyword id="KW-0399">Innate immunity</keyword>
<keyword id="KW-0430">Lectin</keyword>
<keyword id="KW-1185">Reference proteome</keyword>
<keyword id="KW-0677">Repeat</keyword>
<keyword id="KW-0702">S-nitrosylation</keyword>
<keyword id="KW-0964">Secreted</keyword>
<keyword id="KW-0732">Signal</keyword>
<keyword id="KW-0767">Surface film</keyword>
<accession>P50404</accession>
<sequence>MLPFLSMLVLLVQPLGNLGAEMKSLSQRSVPNTCTLVMCSPTENGLPGRDGRDGREGPRGEKGDPGLPGPMGLSGLQGPTGPVGPKGENGSAGEPGPKGERGLSGPPGLPGIPGPAGKEGPSGKQGNIGPQGKPGPKGEAGPKGEVGAPGMQGSTGAKGSTGPKGERGAPGVQGAPGNAGAAGPAGPAGPQGAPGSRGPPGLKGDRGVPGDRGIKGESGLPDSAALRQQMEALKGKLQRLEVAFSHYQKAALFPDGRSVGDKIFRTADSEKPFEDAQEMCKQAGGQLASPRSATENAAIQQLITAHNKAAFLSMTDVGTEGKFTYPTGEPLVYSNWAPGEPNNNGGAENCVEIFTNGQWNDKACGEQRLVICEF</sequence>
<feature type="signal peptide" evidence="1">
    <location>
        <begin position="1"/>
        <end position="19"/>
    </location>
</feature>
<feature type="chain" id="PRO_0000017466" description="Pulmonary surfactant-associated protein D">
    <location>
        <begin position="20"/>
        <end position="374"/>
    </location>
</feature>
<feature type="domain" description="Collagen-like">
    <location>
        <begin position="45"/>
        <end position="221"/>
    </location>
</feature>
<feature type="domain" description="C-type lectin" evidence="4">
    <location>
        <begin position="259"/>
        <end position="374"/>
    </location>
</feature>
<feature type="region of interest" description="Disordered" evidence="5">
    <location>
        <begin position="38"/>
        <end position="222"/>
    </location>
</feature>
<feature type="coiled-coil region" evidence="3">
    <location>
        <begin position="222"/>
        <end position="253"/>
    </location>
</feature>
<feature type="compositionally biased region" description="Basic and acidic residues" evidence="5">
    <location>
        <begin position="49"/>
        <end position="64"/>
    </location>
</feature>
<feature type="compositionally biased region" description="Low complexity" evidence="5">
    <location>
        <begin position="70"/>
        <end position="79"/>
    </location>
</feature>
<feature type="compositionally biased region" description="Low complexity" evidence="5">
    <location>
        <begin position="137"/>
        <end position="149"/>
    </location>
</feature>
<feature type="compositionally biased region" description="Low complexity" evidence="5">
    <location>
        <begin position="169"/>
        <end position="200"/>
    </location>
</feature>
<feature type="compositionally biased region" description="Basic and acidic residues" evidence="5">
    <location>
        <begin position="203"/>
        <end position="215"/>
    </location>
</feature>
<feature type="modified residue" description="S-nitrosocysteine" evidence="2">
    <location>
        <position position="34"/>
    </location>
</feature>
<feature type="modified residue" description="S-nitrosocysteine" evidence="2">
    <location>
        <position position="39"/>
    </location>
</feature>
<feature type="glycosylation site" description="N-linked (GlcNAc...) asparagine" evidence="3">
    <location>
        <position position="89"/>
    </location>
</feature>
<feature type="disulfide bond" evidence="4">
    <location>
        <begin position="280"/>
        <end position="372"/>
    </location>
</feature>
<feature type="disulfide bond" evidence="4">
    <location>
        <begin position="350"/>
        <end position="364"/>
    </location>
</feature>
<comment type="function">
    <text>Contributes to the lung's defense against inhaled microorganisms, organic antigens and toxins. Interacts with compounds such as bacterial lipopolysaccharides, oligosaccharides and fatty acids and modulates leukocyte action in immune response. May participate in the extracellular reorganization or turnover of pulmonary surfactant. Binds strongly maltose residues and to a lesser extent other alpha-glucosyl moieties.</text>
</comment>
<comment type="subunit">
    <text>Oligomeric complex of 4 set of homotrimers.</text>
</comment>
<comment type="interaction">
    <interactant intactId="EBI-8402361">
        <id>P50404</id>
    </interactant>
    <interactant intactId="EBI-8402361">
        <id>P50404</id>
        <label>Sftpd</label>
    </interactant>
    <organismsDiffer>false</organismsDiffer>
    <experiments>2</experiments>
</comment>
<comment type="subcellular location">
    <subcellularLocation>
        <location>Secreted</location>
        <location>Extracellular space</location>
        <location>Extracellular matrix</location>
    </subcellularLocation>
    <subcellularLocation>
        <location>Secreted</location>
        <location>Extracellular space</location>
        <location>Surface film</location>
    </subcellularLocation>
</comment>
<comment type="PTM">
    <text evidence="1">S-nitrosylation at Cys-34 and Cys-39 alters the quaternary structure which results in a pro-inflammatory chemoattractive signaling activity with macrophages.</text>
</comment>
<comment type="miscellaneous">
    <text>Pulmonary surfactant consists of 90% lipid and 10% protein. There are 4 surfactant-associated proteins: 2 collagenous, carbohydrate-binding glycoproteins (SP-A and SP-D) and 2 small hydrophobic proteins (SP-B and SP-C).</text>
</comment>
<comment type="similarity">
    <text evidence="6">Belongs to the SFTPD family.</text>
</comment>
<comment type="online information" name="Functional Glycomics Gateway - Glycan Binding">
    <link uri="http://www.functionalglycomics.org/glycomics/GBPServlet?&amp;operationType=view&amp;cbpId=cbp_mou_Ctlect_170"/>
    <text>Pulmonary surfactant protein SP-D</text>
</comment>
<protein>
    <recommendedName>
        <fullName>Pulmonary surfactant-associated protein D</fullName>
        <shortName>PSP-D</shortName>
        <shortName>SP-D</shortName>
    </recommendedName>
    <alternativeName>
        <fullName>Lung surfactant protein D</fullName>
    </alternativeName>
</protein>
<gene>
    <name type="primary">Sftpd</name>
    <name type="synonym">Sftp4</name>
</gene>